<keyword id="KW-0963">Cytoplasm</keyword>
<keyword id="KW-0275">Fatty acid biosynthesis</keyword>
<keyword id="KW-0276">Fatty acid metabolism</keyword>
<keyword id="KW-0444">Lipid biosynthesis</keyword>
<keyword id="KW-0443">Lipid metabolism</keyword>
<keyword id="KW-0596">Phosphopantetheine</keyword>
<keyword id="KW-0597">Phosphoprotein</keyword>
<keyword id="KW-1185">Reference proteome</keyword>
<dbReference type="EMBL" id="AE002098">
    <property type="protein sequence ID" value="AAF40676.1"/>
    <property type="molecule type" value="Genomic_DNA"/>
</dbReference>
<dbReference type="PIR" id="F81222">
    <property type="entry name" value="F81222"/>
</dbReference>
<dbReference type="RefSeq" id="NP_273277.1">
    <property type="nucleotide sequence ID" value="NC_003112.2"/>
</dbReference>
<dbReference type="RefSeq" id="WP_002215574.1">
    <property type="nucleotide sequence ID" value="NC_003112.2"/>
</dbReference>
<dbReference type="SMR" id="P63442"/>
<dbReference type="FunCoup" id="P63442">
    <property type="interactions" value="518"/>
</dbReference>
<dbReference type="STRING" id="122586.NMB0220"/>
<dbReference type="PaxDb" id="122586-NMB0220"/>
<dbReference type="GeneID" id="93387307"/>
<dbReference type="KEGG" id="nme:NMB0220"/>
<dbReference type="PATRIC" id="fig|122586.8.peg.280"/>
<dbReference type="HOGENOM" id="CLU_108696_5_1_4"/>
<dbReference type="InParanoid" id="P63442"/>
<dbReference type="OrthoDB" id="9804551at2"/>
<dbReference type="UniPathway" id="UPA00094"/>
<dbReference type="Proteomes" id="UP000000425">
    <property type="component" value="Chromosome"/>
</dbReference>
<dbReference type="GO" id="GO:0005829">
    <property type="term" value="C:cytosol"/>
    <property type="evidence" value="ECO:0000318"/>
    <property type="project" value="GO_Central"/>
</dbReference>
<dbReference type="GO" id="GO:0016020">
    <property type="term" value="C:membrane"/>
    <property type="evidence" value="ECO:0007669"/>
    <property type="project" value="GOC"/>
</dbReference>
<dbReference type="GO" id="GO:0000035">
    <property type="term" value="F:acyl binding"/>
    <property type="evidence" value="ECO:0000318"/>
    <property type="project" value="GO_Central"/>
</dbReference>
<dbReference type="GO" id="GO:0000036">
    <property type="term" value="F:acyl carrier activity"/>
    <property type="evidence" value="ECO:0000318"/>
    <property type="project" value="GO_Central"/>
</dbReference>
<dbReference type="GO" id="GO:0009245">
    <property type="term" value="P:lipid A biosynthetic process"/>
    <property type="evidence" value="ECO:0000318"/>
    <property type="project" value="GO_Central"/>
</dbReference>
<dbReference type="FunFam" id="1.10.1200.10:FF:000001">
    <property type="entry name" value="Acyl carrier protein"/>
    <property type="match status" value="1"/>
</dbReference>
<dbReference type="Gene3D" id="1.10.1200.10">
    <property type="entry name" value="ACP-like"/>
    <property type="match status" value="1"/>
</dbReference>
<dbReference type="HAMAP" id="MF_01217">
    <property type="entry name" value="Acyl_carrier"/>
    <property type="match status" value="1"/>
</dbReference>
<dbReference type="InterPro" id="IPR003231">
    <property type="entry name" value="ACP"/>
</dbReference>
<dbReference type="InterPro" id="IPR036736">
    <property type="entry name" value="ACP-like_sf"/>
</dbReference>
<dbReference type="InterPro" id="IPR009081">
    <property type="entry name" value="PP-bd_ACP"/>
</dbReference>
<dbReference type="InterPro" id="IPR006162">
    <property type="entry name" value="Ppantetheine_attach_site"/>
</dbReference>
<dbReference type="NCBIfam" id="TIGR00517">
    <property type="entry name" value="acyl_carrier"/>
    <property type="match status" value="1"/>
</dbReference>
<dbReference type="NCBIfam" id="NF002148">
    <property type="entry name" value="PRK00982.1-2"/>
    <property type="match status" value="1"/>
</dbReference>
<dbReference type="NCBIfam" id="NF002149">
    <property type="entry name" value="PRK00982.1-3"/>
    <property type="match status" value="1"/>
</dbReference>
<dbReference type="NCBIfam" id="NF002150">
    <property type="entry name" value="PRK00982.1-4"/>
    <property type="match status" value="1"/>
</dbReference>
<dbReference type="NCBIfam" id="NF002151">
    <property type="entry name" value="PRK00982.1-5"/>
    <property type="match status" value="1"/>
</dbReference>
<dbReference type="PANTHER" id="PTHR20863">
    <property type="entry name" value="ACYL CARRIER PROTEIN"/>
    <property type="match status" value="1"/>
</dbReference>
<dbReference type="PANTHER" id="PTHR20863:SF76">
    <property type="entry name" value="CARRIER DOMAIN-CONTAINING PROTEIN"/>
    <property type="match status" value="1"/>
</dbReference>
<dbReference type="Pfam" id="PF00550">
    <property type="entry name" value="PP-binding"/>
    <property type="match status" value="1"/>
</dbReference>
<dbReference type="SUPFAM" id="SSF47336">
    <property type="entry name" value="ACP-like"/>
    <property type="match status" value="1"/>
</dbReference>
<dbReference type="PROSITE" id="PS50075">
    <property type="entry name" value="CARRIER"/>
    <property type="match status" value="1"/>
</dbReference>
<dbReference type="PROSITE" id="PS00012">
    <property type="entry name" value="PHOSPHOPANTETHEINE"/>
    <property type="match status" value="1"/>
</dbReference>
<reference key="1">
    <citation type="journal article" date="2000" name="Science">
        <title>Complete genome sequence of Neisseria meningitidis serogroup B strain MC58.</title>
        <authorList>
            <person name="Tettelin H."/>
            <person name="Saunders N.J."/>
            <person name="Heidelberg J.F."/>
            <person name="Jeffries A.C."/>
            <person name="Nelson K.E."/>
            <person name="Eisen J.A."/>
            <person name="Ketchum K.A."/>
            <person name="Hood D.W."/>
            <person name="Peden J.F."/>
            <person name="Dodson R.J."/>
            <person name="Nelson W.C."/>
            <person name="Gwinn M.L."/>
            <person name="DeBoy R.T."/>
            <person name="Peterson J.D."/>
            <person name="Hickey E.K."/>
            <person name="Haft D.H."/>
            <person name="Salzberg S.L."/>
            <person name="White O."/>
            <person name="Fleischmann R.D."/>
            <person name="Dougherty B.A."/>
            <person name="Mason T.M."/>
            <person name="Ciecko A."/>
            <person name="Parksey D.S."/>
            <person name="Blair E."/>
            <person name="Cittone H."/>
            <person name="Clark E.B."/>
            <person name="Cotton M.D."/>
            <person name="Utterback T.R."/>
            <person name="Khouri H.M."/>
            <person name="Qin H."/>
            <person name="Vamathevan J.J."/>
            <person name="Gill J."/>
            <person name="Scarlato V."/>
            <person name="Masignani V."/>
            <person name="Pizza M."/>
            <person name="Grandi G."/>
            <person name="Sun L."/>
            <person name="Smith H.O."/>
            <person name="Fraser C.M."/>
            <person name="Moxon E.R."/>
            <person name="Rappuoli R."/>
            <person name="Venter J.C."/>
        </authorList>
    </citation>
    <scope>NUCLEOTIDE SEQUENCE [LARGE SCALE GENOMIC DNA]</scope>
    <source>
        <strain>ATCC BAA-335 / MC58</strain>
    </source>
</reference>
<protein>
    <recommendedName>
        <fullName evidence="1">Acyl carrier protein</fullName>
        <shortName evidence="1">ACP</shortName>
    </recommendedName>
</protein>
<organism>
    <name type="scientific">Neisseria meningitidis serogroup B (strain ATCC BAA-335 / MC58)</name>
    <dbReference type="NCBI Taxonomy" id="122586"/>
    <lineage>
        <taxon>Bacteria</taxon>
        <taxon>Pseudomonadati</taxon>
        <taxon>Pseudomonadota</taxon>
        <taxon>Betaproteobacteria</taxon>
        <taxon>Neisseriales</taxon>
        <taxon>Neisseriaceae</taxon>
        <taxon>Neisseria</taxon>
    </lineage>
</organism>
<feature type="chain" id="PRO_0000180157" description="Acyl carrier protein">
    <location>
        <begin position="1"/>
        <end position="78"/>
    </location>
</feature>
<feature type="domain" description="Carrier" evidence="2">
    <location>
        <begin position="2"/>
        <end position="77"/>
    </location>
</feature>
<feature type="modified residue" description="O-(pantetheine 4'-phosphoryl)serine" evidence="2">
    <location>
        <position position="37"/>
    </location>
</feature>
<name>ACP_NEIMB</name>
<gene>
    <name evidence="1" type="primary">acpP</name>
    <name type="ordered locus">NMB0220</name>
</gene>
<sequence length="78" mass="8511">MSNIEQQVKKIVAEQLGVNEADVKNESSFQDDLGADSLDTVELVMALEEAFGCEIPDEDAEKITTVQLAIDYINAHNG</sequence>
<evidence type="ECO:0000255" key="1">
    <source>
        <dbReference type="HAMAP-Rule" id="MF_01217"/>
    </source>
</evidence>
<evidence type="ECO:0000255" key="2">
    <source>
        <dbReference type="PROSITE-ProRule" id="PRU00258"/>
    </source>
</evidence>
<accession>P63442</accession>
<accession>Q9JR72</accession>
<comment type="function">
    <text evidence="1">Carrier of the growing fatty acid chain in fatty acid biosynthesis.</text>
</comment>
<comment type="pathway">
    <text evidence="1">Lipid metabolism; fatty acid biosynthesis.</text>
</comment>
<comment type="subcellular location">
    <subcellularLocation>
        <location evidence="1">Cytoplasm</location>
    </subcellularLocation>
</comment>
<comment type="PTM">
    <text evidence="1">4'-phosphopantetheine is transferred from CoA to a specific serine of apo-ACP by AcpS. This modification is essential for activity because fatty acids are bound in thioester linkage to the sulfhydryl of the prosthetic group.</text>
</comment>
<comment type="similarity">
    <text evidence="1">Belongs to the acyl carrier protein (ACP) family.</text>
</comment>
<proteinExistence type="inferred from homology"/>